<comment type="function">
    <text evidence="1 6">Ubiquitin-specific protease that specifically deubiquitinates monoubiquitinated DNA polymerase beta (POLB), stabilizing POLB thereby playing a role in base-excision repair (BER) (By similarity). Acts as a regulator of cell growth and genome integrity. May also indirectly regulate CDC25A expression at a transcriptional level.</text>
</comment>
<comment type="catalytic activity">
    <reaction>
        <text>Thiol-dependent hydrolysis of ester, thioester, amide, peptide and isopeptide bonds formed by the C-terminal Gly of ubiquitin (a 76-residue protein attached to proteins as an intracellular targeting signal).</text>
        <dbReference type="EC" id="3.4.19.12"/>
    </reaction>
</comment>
<comment type="subunit">
    <text evidence="1">Interacts with BTRC and FBXW11. Interacts with POLB (By similarity).</text>
</comment>
<comment type="subcellular location">
    <subcellularLocation>
        <location evidence="1">Cytoplasm</location>
    </subcellularLocation>
</comment>
<comment type="alternative products">
    <event type="alternative splicing"/>
    <isoform>
        <id>Q8BY87-1</id>
        <name>1</name>
        <sequence type="displayed"/>
    </isoform>
    <isoform>
        <id>Q8BY87-2</id>
        <name>2</name>
        <sequence type="described" ref="VSP_014416"/>
    </isoform>
</comment>
<comment type="similarity">
    <text evidence="8">Belongs to the peptidase C19 family. USP47 subfamily.</text>
</comment>
<comment type="sequence caution" evidence="8">
    <conflict type="erroneous initiation">
        <sequence resource="EMBL-CDS" id="BAC27179"/>
    </conflict>
</comment>
<comment type="sequence caution" evidence="8">
    <conflict type="erroneous initiation">
        <sequence resource="EMBL-CDS" id="BAC27195"/>
    </conflict>
</comment>
<comment type="sequence caution" evidence="8">
    <conflict type="frameshift">
        <sequence resource="EMBL-CDS" id="BAC38411"/>
    </conflict>
</comment>
<organism>
    <name type="scientific">Mus musculus</name>
    <name type="common">Mouse</name>
    <dbReference type="NCBI Taxonomy" id="10090"/>
    <lineage>
        <taxon>Eukaryota</taxon>
        <taxon>Metazoa</taxon>
        <taxon>Chordata</taxon>
        <taxon>Craniata</taxon>
        <taxon>Vertebrata</taxon>
        <taxon>Euteleostomi</taxon>
        <taxon>Mammalia</taxon>
        <taxon>Eutheria</taxon>
        <taxon>Euarchontoglires</taxon>
        <taxon>Glires</taxon>
        <taxon>Rodentia</taxon>
        <taxon>Myomorpha</taxon>
        <taxon>Muroidea</taxon>
        <taxon>Muridae</taxon>
        <taxon>Murinae</taxon>
        <taxon>Mus</taxon>
        <taxon>Mus</taxon>
    </lineage>
</organism>
<accession>Q8BY87</accession>
<accession>Q32NY0</accession>
<accession>Q5EBP2</accession>
<accession>Q6KAR9</accession>
<accession>Q80V06</accession>
<accession>Q8BHU1</accession>
<accession>Q8BI15</accession>
<accession>Q8BI16</accession>
<accession>Q8BUW4</accession>
<accession>Q91X25</accession>
<proteinExistence type="evidence at protein level"/>
<reference key="1">
    <citation type="journal article" date="2005" name="Science">
        <title>The transcriptional landscape of the mammalian genome.</title>
        <authorList>
            <person name="Carninci P."/>
            <person name="Kasukawa T."/>
            <person name="Katayama S."/>
            <person name="Gough J."/>
            <person name="Frith M.C."/>
            <person name="Maeda N."/>
            <person name="Oyama R."/>
            <person name="Ravasi T."/>
            <person name="Lenhard B."/>
            <person name="Wells C."/>
            <person name="Kodzius R."/>
            <person name="Shimokawa K."/>
            <person name="Bajic V.B."/>
            <person name="Brenner S.E."/>
            <person name="Batalov S."/>
            <person name="Forrest A.R."/>
            <person name="Zavolan M."/>
            <person name="Davis M.J."/>
            <person name="Wilming L.G."/>
            <person name="Aidinis V."/>
            <person name="Allen J.E."/>
            <person name="Ambesi-Impiombato A."/>
            <person name="Apweiler R."/>
            <person name="Aturaliya R.N."/>
            <person name="Bailey T.L."/>
            <person name="Bansal M."/>
            <person name="Baxter L."/>
            <person name="Beisel K.W."/>
            <person name="Bersano T."/>
            <person name="Bono H."/>
            <person name="Chalk A.M."/>
            <person name="Chiu K.P."/>
            <person name="Choudhary V."/>
            <person name="Christoffels A."/>
            <person name="Clutterbuck D.R."/>
            <person name="Crowe M.L."/>
            <person name="Dalla E."/>
            <person name="Dalrymple B.P."/>
            <person name="de Bono B."/>
            <person name="Della Gatta G."/>
            <person name="di Bernardo D."/>
            <person name="Down T."/>
            <person name="Engstrom P."/>
            <person name="Fagiolini M."/>
            <person name="Faulkner G."/>
            <person name="Fletcher C.F."/>
            <person name="Fukushima T."/>
            <person name="Furuno M."/>
            <person name="Futaki S."/>
            <person name="Gariboldi M."/>
            <person name="Georgii-Hemming P."/>
            <person name="Gingeras T.R."/>
            <person name="Gojobori T."/>
            <person name="Green R.E."/>
            <person name="Gustincich S."/>
            <person name="Harbers M."/>
            <person name="Hayashi Y."/>
            <person name="Hensch T.K."/>
            <person name="Hirokawa N."/>
            <person name="Hill D."/>
            <person name="Huminiecki L."/>
            <person name="Iacono M."/>
            <person name="Ikeo K."/>
            <person name="Iwama A."/>
            <person name="Ishikawa T."/>
            <person name="Jakt M."/>
            <person name="Kanapin A."/>
            <person name="Katoh M."/>
            <person name="Kawasawa Y."/>
            <person name="Kelso J."/>
            <person name="Kitamura H."/>
            <person name="Kitano H."/>
            <person name="Kollias G."/>
            <person name="Krishnan S.P."/>
            <person name="Kruger A."/>
            <person name="Kummerfeld S.K."/>
            <person name="Kurochkin I.V."/>
            <person name="Lareau L.F."/>
            <person name="Lazarevic D."/>
            <person name="Lipovich L."/>
            <person name="Liu J."/>
            <person name="Liuni S."/>
            <person name="McWilliam S."/>
            <person name="Madan Babu M."/>
            <person name="Madera M."/>
            <person name="Marchionni L."/>
            <person name="Matsuda H."/>
            <person name="Matsuzawa S."/>
            <person name="Miki H."/>
            <person name="Mignone F."/>
            <person name="Miyake S."/>
            <person name="Morris K."/>
            <person name="Mottagui-Tabar S."/>
            <person name="Mulder N."/>
            <person name="Nakano N."/>
            <person name="Nakauchi H."/>
            <person name="Ng P."/>
            <person name="Nilsson R."/>
            <person name="Nishiguchi S."/>
            <person name="Nishikawa S."/>
            <person name="Nori F."/>
            <person name="Ohara O."/>
            <person name="Okazaki Y."/>
            <person name="Orlando V."/>
            <person name="Pang K.C."/>
            <person name="Pavan W.J."/>
            <person name="Pavesi G."/>
            <person name="Pesole G."/>
            <person name="Petrovsky N."/>
            <person name="Piazza S."/>
            <person name="Reed J."/>
            <person name="Reid J.F."/>
            <person name="Ring B.Z."/>
            <person name="Ringwald M."/>
            <person name="Rost B."/>
            <person name="Ruan Y."/>
            <person name="Salzberg S.L."/>
            <person name="Sandelin A."/>
            <person name="Schneider C."/>
            <person name="Schoenbach C."/>
            <person name="Sekiguchi K."/>
            <person name="Semple C.A."/>
            <person name="Seno S."/>
            <person name="Sessa L."/>
            <person name="Sheng Y."/>
            <person name="Shibata Y."/>
            <person name="Shimada H."/>
            <person name="Shimada K."/>
            <person name="Silva D."/>
            <person name="Sinclair B."/>
            <person name="Sperling S."/>
            <person name="Stupka E."/>
            <person name="Sugiura K."/>
            <person name="Sultana R."/>
            <person name="Takenaka Y."/>
            <person name="Taki K."/>
            <person name="Tammoja K."/>
            <person name="Tan S.L."/>
            <person name="Tang S."/>
            <person name="Taylor M.S."/>
            <person name="Tegner J."/>
            <person name="Teichmann S.A."/>
            <person name="Ueda H.R."/>
            <person name="van Nimwegen E."/>
            <person name="Verardo R."/>
            <person name="Wei C.L."/>
            <person name="Yagi K."/>
            <person name="Yamanishi H."/>
            <person name="Zabarovsky E."/>
            <person name="Zhu S."/>
            <person name="Zimmer A."/>
            <person name="Hide W."/>
            <person name="Bult C."/>
            <person name="Grimmond S.M."/>
            <person name="Teasdale R.D."/>
            <person name="Liu E.T."/>
            <person name="Brusic V."/>
            <person name="Quackenbush J."/>
            <person name="Wahlestedt C."/>
            <person name="Mattick J.S."/>
            <person name="Hume D.A."/>
            <person name="Kai C."/>
            <person name="Sasaki D."/>
            <person name="Tomaru Y."/>
            <person name="Fukuda S."/>
            <person name="Kanamori-Katayama M."/>
            <person name="Suzuki M."/>
            <person name="Aoki J."/>
            <person name="Arakawa T."/>
            <person name="Iida J."/>
            <person name="Imamura K."/>
            <person name="Itoh M."/>
            <person name="Kato T."/>
            <person name="Kawaji H."/>
            <person name="Kawagashira N."/>
            <person name="Kawashima T."/>
            <person name="Kojima M."/>
            <person name="Kondo S."/>
            <person name="Konno H."/>
            <person name="Nakano K."/>
            <person name="Ninomiya N."/>
            <person name="Nishio T."/>
            <person name="Okada M."/>
            <person name="Plessy C."/>
            <person name="Shibata K."/>
            <person name="Shiraki T."/>
            <person name="Suzuki S."/>
            <person name="Tagami M."/>
            <person name="Waki K."/>
            <person name="Watahiki A."/>
            <person name="Okamura-Oho Y."/>
            <person name="Suzuki H."/>
            <person name="Kawai J."/>
            <person name="Hayashizaki Y."/>
        </authorList>
    </citation>
    <scope>NUCLEOTIDE SEQUENCE [LARGE SCALE MRNA] OF 1-379 (ISOFORM 1)</scope>
    <scope>NUCLEOTIDE SEQUENCE [LARGE SCALE MRNA] OF 1-591 (ISOFORM 2)</scope>
    <scope>NUCLEOTIDE SEQUENCE [LARGE SCALE MRNA] OF 637-1376 (ISOFORMS 1/2)</scope>
    <source>
        <strain>C57BL/6J</strain>
        <tissue>Cerebellum</tissue>
        <tissue>Thymus</tissue>
    </source>
</reference>
<reference key="2">
    <citation type="journal article" date="2004" name="DNA Res.">
        <title>Prediction of the coding sequences of mouse homologues of FLJ genes: the complete nucleotide sequences of 110 mouse FLJ-homologous cDNAs identified by screening of terminal sequences of cDNA clones randomly sampled from size-fractionated libraries.</title>
        <authorList>
            <person name="Okazaki N."/>
            <person name="Kikuno R."/>
            <person name="Ohara R."/>
            <person name="Inamoto S."/>
            <person name="Koseki H."/>
            <person name="Hiraoka S."/>
            <person name="Saga Y."/>
            <person name="Kitamura H."/>
            <person name="Nakagawa T."/>
            <person name="Nagase T."/>
            <person name="Ohara O."/>
            <person name="Koga H."/>
        </authorList>
    </citation>
    <scope>NUCLEOTIDE SEQUENCE [LARGE SCALE MRNA] OF 395-1376</scope>
    <source>
        <tissue>Brain</tissue>
    </source>
</reference>
<reference key="3">
    <citation type="journal article" date="2004" name="Genome Res.">
        <title>The status, quality, and expansion of the NIH full-length cDNA project: the Mammalian Gene Collection (MGC).</title>
        <authorList>
            <consortium name="The MGC Project Team"/>
        </authorList>
    </citation>
    <scope>NUCLEOTIDE SEQUENCE [LARGE SCALE MRNA]</scope>
    <source>
        <strain>C3H/He</strain>
        <strain>Czech II</strain>
        <tissue>Brain</tissue>
        <tissue>Liver</tissue>
        <tissue>Mammary gland</tissue>
        <tissue>Mesenchymal stem cell</tissue>
    </source>
</reference>
<reference key="4">
    <citation type="journal article" date="2004" name="Mol. Cell. Proteomics">
        <title>Phosphoproteomic analysis of the developing mouse brain.</title>
        <authorList>
            <person name="Ballif B.A."/>
            <person name="Villen J."/>
            <person name="Beausoleil S.A."/>
            <person name="Schwartz D."/>
            <person name="Gygi S.P."/>
        </authorList>
    </citation>
    <scope>PHOSPHORYLATION [LARGE SCALE ANALYSIS] AT SER-911</scope>
    <scope>IDENTIFICATION BY MASS SPECTROMETRY [LARGE SCALE ANALYSIS]</scope>
    <source>
        <tissue>Embryonic brain</tissue>
    </source>
</reference>
<reference key="5">
    <citation type="journal article" date="2007" name="Proc. Natl. Acad. Sci. U.S.A.">
        <title>Large-scale phosphorylation analysis of mouse liver.</title>
        <authorList>
            <person name="Villen J."/>
            <person name="Beausoleil S.A."/>
            <person name="Gerber S.A."/>
            <person name="Gygi S.P."/>
        </authorList>
    </citation>
    <scope>PHOSPHORYLATION [LARGE SCALE ANALYSIS] AT THR-1016</scope>
    <scope>IDENTIFICATION BY MASS SPECTROMETRY [LARGE SCALE ANALYSIS]</scope>
    <source>
        <tissue>Liver</tissue>
    </source>
</reference>
<reference key="6">
    <citation type="journal article" date="2010" name="Cell">
        <title>A tissue-specific atlas of mouse protein phosphorylation and expression.</title>
        <authorList>
            <person name="Huttlin E.L."/>
            <person name="Jedrychowski M.P."/>
            <person name="Elias J.E."/>
            <person name="Goswami T."/>
            <person name="Rad R."/>
            <person name="Beausoleil S.A."/>
            <person name="Villen J."/>
            <person name="Haas W."/>
            <person name="Sowa M.E."/>
            <person name="Gygi S.P."/>
        </authorList>
    </citation>
    <scope>PHOSPHORYLATION [LARGE SCALE ANALYSIS] AT SER-911; SER-934; SER-1014 AND THR-1016</scope>
    <scope>IDENTIFICATION BY MASS SPECTROMETRY [LARGE SCALE ANALYSIS]</scope>
    <source>
        <tissue>Brain</tissue>
        <tissue>Brown adipose tissue</tissue>
        <tissue>Heart</tissue>
        <tissue>Kidney</tissue>
        <tissue>Liver</tissue>
        <tissue>Lung</tissue>
        <tissue>Pancreas</tissue>
        <tissue>Spleen</tissue>
        <tissue>Testis</tissue>
    </source>
</reference>
<reference key="7">
    <citation type="journal article" date="2010" name="Oncogene">
        <title>The ubiquitin-specific protease USP47 is a novel beta-TRCP interactor regulating cell survival.</title>
        <authorList>
            <person name="Peschiaroli A."/>
            <person name="Skaar J.R."/>
            <person name="Pagano M."/>
            <person name="Melino G."/>
        </authorList>
    </citation>
    <scope>FUNCTION</scope>
</reference>
<name>UBP47_MOUSE</name>
<keyword id="KW-0007">Acetylation</keyword>
<keyword id="KW-0025">Alternative splicing</keyword>
<keyword id="KW-0963">Cytoplasm</keyword>
<keyword id="KW-0227">DNA damage</keyword>
<keyword id="KW-0234">DNA repair</keyword>
<keyword id="KW-0378">Hydrolase</keyword>
<keyword id="KW-0597">Phosphoprotein</keyword>
<keyword id="KW-0645">Protease</keyword>
<keyword id="KW-1185">Reference proteome</keyword>
<keyword id="KW-0788">Thiol protease</keyword>
<keyword id="KW-0833">Ubl conjugation pathway</keyword>
<protein>
    <recommendedName>
        <fullName>Ubiquitin carboxyl-terminal hydrolase 47</fullName>
        <ecNumber>3.4.19.12</ecNumber>
    </recommendedName>
    <alternativeName>
        <fullName>Deubiquitinating enzyme 47</fullName>
    </alternativeName>
    <alternativeName>
        <fullName>Ubiquitin thioesterase 47</fullName>
    </alternativeName>
    <alternativeName>
        <fullName>Ubiquitin-specific-processing protease 47</fullName>
    </alternativeName>
</protein>
<gene>
    <name type="primary">Usp47</name>
</gene>
<dbReference type="EC" id="3.4.19.12"/>
<dbReference type="EMBL" id="AK030909">
    <property type="protein sequence ID" value="BAC27179.1"/>
    <property type="status" value="ALT_INIT"/>
    <property type="molecule type" value="mRNA"/>
</dbReference>
<dbReference type="EMBL" id="AK030963">
    <property type="protein sequence ID" value="BAC27195.1"/>
    <property type="status" value="ALT_INIT"/>
    <property type="molecule type" value="mRNA"/>
</dbReference>
<dbReference type="EMBL" id="AK041541">
    <property type="protein sequence ID" value="BAC30979.1"/>
    <property type="molecule type" value="mRNA"/>
</dbReference>
<dbReference type="EMBL" id="AK082114">
    <property type="protein sequence ID" value="BAC38411.1"/>
    <property type="status" value="ALT_FRAME"/>
    <property type="molecule type" value="mRNA"/>
</dbReference>
<dbReference type="EMBL" id="AK087981">
    <property type="protein sequence ID" value="BAC40073.1"/>
    <property type="molecule type" value="mRNA"/>
</dbReference>
<dbReference type="EMBL" id="AK131138">
    <property type="protein sequence ID" value="BAD21388.1"/>
    <property type="molecule type" value="mRNA"/>
</dbReference>
<dbReference type="EMBL" id="BC012722">
    <property type="protein sequence ID" value="AAH12722.1"/>
    <property type="molecule type" value="mRNA"/>
</dbReference>
<dbReference type="EMBL" id="BC024117">
    <property type="protein sequence ID" value="AAH24117.1"/>
    <property type="molecule type" value="mRNA"/>
</dbReference>
<dbReference type="EMBL" id="BC089364">
    <property type="protein sequence ID" value="AAH89364.1"/>
    <property type="molecule type" value="mRNA"/>
</dbReference>
<dbReference type="EMBL" id="BC108425">
    <property type="protein sequence ID" value="AAI08426.1"/>
    <property type="molecule type" value="mRNA"/>
</dbReference>
<dbReference type="CCDS" id="CCDS40089.1">
    <molecule id="Q8BY87-2"/>
</dbReference>
<dbReference type="CCDS" id="CCDS85384.1">
    <molecule id="Q8BY87-1"/>
</dbReference>
<dbReference type="RefSeq" id="NP_598519.2">
    <molecule id="Q8BY87-2"/>
    <property type="nucleotide sequence ID" value="NM_133758.3"/>
</dbReference>
<dbReference type="RefSeq" id="NP_796223.2">
    <molecule id="Q8BY87-1"/>
    <property type="nucleotide sequence ID" value="NM_177249.3"/>
</dbReference>
<dbReference type="SMR" id="Q8BY87"/>
<dbReference type="BioGRID" id="217138">
    <property type="interactions" value="6"/>
</dbReference>
<dbReference type="FunCoup" id="Q8BY87">
    <property type="interactions" value="4502"/>
</dbReference>
<dbReference type="IntAct" id="Q8BY87">
    <property type="interactions" value="1"/>
</dbReference>
<dbReference type="MINT" id="Q8BY87"/>
<dbReference type="STRING" id="10090.ENSMUSP00000147619"/>
<dbReference type="MEROPS" id="C19.055"/>
<dbReference type="GlyGen" id="Q8BY87">
    <property type="glycosylation" value="2 sites, 1 N-linked glycan (1 site), 1 O-linked glycan (1 site)"/>
</dbReference>
<dbReference type="iPTMnet" id="Q8BY87"/>
<dbReference type="PhosphoSitePlus" id="Q8BY87"/>
<dbReference type="jPOST" id="Q8BY87"/>
<dbReference type="PaxDb" id="10090-ENSMUSP00000102264"/>
<dbReference type="PeptideAtlas" id="Q8BY87"/>
<dbReference type="ProteomicsDB" id="298364">
    <molecule id="Q8BY87-1"/>
</dbReference>
<dbReference type="ProteomicsDB" id="298365">
    <molecule id="Q8BY87-2"/>
</dbReference>
<dbReference type="Pumba" id="Q8BY87"/>
<dbReference type="Antibodypedia" id="24483">
    <property type="antibodies" value="155 antibodies from 26 providers"/>
</dbReference>
<dbReference type="DNASU" id="74996"/>
<dbReference type="Ensembl" id="ENSMUST00000106653.4">
    <molecule id="Q8BY87-2"/>
    <property type="protein sequence ID" value="ENSMUSP00000102264.3"/>
    <property type="gene ID" value="ENSMUSG00000059263.10"/>
</dbReference>
<dbReference type="Ensembl" id="ENSMUST00000210309.2">
    <molecule id="Q8BY87-1"/>
    <property type="protein sequence ID" value="ENSMUSP00000147619.2"/>
    <property type="gene ID" value="ENSMUSG00000059263.10"/>
</dbReference>
<dbReference type="GeneID" id="74996"/>
<dbReference type="KEGG" id="mmu:74996"/>
<dbReference type="UCSC" id="uc009jgg.2">
    <molecule id="Q8BY87-2"/>
    <property type="organism name" value="mouse"/>
</dbReference>
<dbReference type="UCSC" id="uc009jgh.2">
    <molecule id="Q8BY87-1"/>
    <property type="organism name" value="mouse"/>
</dbReference>
<dbReference type="AGR" id="MGI:1922246"/>
<dbReference type="CTD" id="55031"/>
<dbReference type="MGI" id="MGI:1922246">
    <property type="gene designation" value="Usp47"/>
</dbReference>
<dbReference type="VEuPathDB" id="HostDB:ENSMUSG00000059263"/>
<dbReference type="eggNOG" id="KOG4598">
    <property type="taxonomic scope" value="Eukaryota"/>
</dbReference>
<dbReference type="GeneTree" id="ENSGT00940000157223"/>
<dbReference type="HOGENOM" id="CLU_002928_0_0_1"/>
<dbReference type="InParanoid" id="Q8BY87"/>
<dbReference type="OMA" id="CEWIVSK"/>
<dbReference type="PhylomeDB" id="Q8BY87"/>
<dbReference type="TreeFam" id="TF314142"/>
<dbReference type="Reactome" id="R-MMU-5689880">
    <property type="pathway name" value="Ub-specific processing proteases"/>
</dbReference>
<dbReference type="BioGRID-ORCS" id="74996">
    <property type="hits" value="2 hits in 112 CRISPR screens"/>
</dbReference>
<dbReference type="ChiTaRS" id="Usp47">
    <property type="organism name" value="mouse"/>
</dbReference>
<dbReference type="PRO" id="PR:Q8BY87"/>
<dbReference type="Proteomes" id="UP000000589">
    <property type="component" value="Chromosome 7"/>
</dbReference>
<dbReference type="RNAct" id="Q8BY87">
    <property type="molecule type" value="protein"/>
</dbReference>
<dbReference type="Bgee" id="ENSMUSG00000059263">
    <property type="expression patterns" value="Expressed in ciliary body and 243 other cell types or tissues"/>
</dbReference>
<dbReference type="ExpressionAtlas" id="Q8BY87">
    <property type="expression patterns" value="baseline and differential"/>
</dbReference>
<dbReference type="GO" id="GO:0005737">
    <property type="term" value="C:cytoplasm"/>
    <property type="evidence" value="ECO:0000250"/>
    <property type="project" value="UniProtKB"/>
</dbReference>
<dbReference type="GO" id="GO:0005634">
    <property type="term" value="C:nucleus"/>
    <property type="evidence" value="ECO:0007669"/>
    <property type="project" value="Ensembl"/>
</dbReference>
<dbReference type="GO" id="GO:0019005">
    <property type="term" value="C:SCF ubiquitin ligase complex"/>
    <property type="evidence" value="ECO:0000250"/>
    <property type="project" value="UniProtKB"/>
</dbReference>
<dbReference type="GO" id="GO:0004843">
    <property type="term" value="F:cysteine-type deubiquitinase activity"/>
    <property type="evidence" value="ECO:0000250"/>
    <property type="project" value="UniProtKB"/>
</dbReference>
<dbReference type="GO" id="GO:0071987">
    <property type="term" value="F:WD40-repeat domain binding"/>
    <property type="evidence" value="ECO:0007669"/>
    <property type="project" value="Ensembl"/>
</dbReference>
<dbReference type="GO" id="GO:0006284">
    <property type="term" value="P:base-excision repair"/>
    <property type="evidence" value="ECO:0000250"/>
    <property type="project" value="UniProtKB"/>
</dbReference>
<dbReference type="GO" id="GO:0006974">
    <property type="term" value="P:DNA damage response"/>
    <property type="evidence" value="ECO:0000250"/>
    <property type="project" value="UniProtKB"/>
</dbReference>
<dbReference type="GO" id="GO:0008630">
    <property type="term" value="P:intrinsic apoptotic signaling pathway in response to DNA damage"/>
    <property type="evidence" value="ECO:0000315"/>
    <property type="project" value="MGI"/>
</dbReference>
<dbReference type="GO" id="GO:0035520">
    <property type="term" value="P:monoubiquitinated protein deubiquitination"/>
    <property type="evidence" value="ECO:0000250"/>
    <property type="project" value="UniProtKB"/>
</dbReference>
<dbReference type="GO" id="GO:1902230">
    <property type="term" value="P:negative regulation of intrinsic apoptotic signaling pathway in response to DNA damage"/>
    <property type="evidence" value="ECO:0000315"/>
    <property type="project" value="MGI"/>
</dbReference>
<dbReference type="GO" id="GO:0090263">
    <property type="term" value="P:positive regulation of canonical Wnt signaling pathway"/>
    <property type="evidence" value="ECO:0007669"/>
    <property type="project" value="Ensembl"/>
</dbReference>
<dbReference type="GO" id="GO:0006508">
    <property type="term" value="P:proteolysis"/>
    <property type="evidence" value="ECO:0007669"/>
    <property type="project" value="UniProtKB-KW"/>
</dbReference>
<dbReference type="CDD" id="cd02659">
    <property type="entry name" value="peptidase_C19C"/>
    <property type="match status" value="1"/>
</dbReference>
<dbReference type="Gene3D" id="3.90.70.10">
    <property type="entry name" value="Cysteine proteinases"/>
    <property type="match status" value="1"/>
</dbReference>
<dbReference type="InterPro" id="IPR038765">
    <property type="entry name" value="Papain-like_cys_pep_sf"/>
</dbReference>
<dbReference type="InterPro" id="IPR050164">
    <property type="entry name" value="Peptidase_C19"/>
</dbReference>
<dbReference type="InterPro" id="IPR001394">
    <property type="entry name" value="Peptidase_C19_UCH"/>
</dbReference>
<dbReference type="InterPro" id="IPR029071">
    <property type="entry name" value="Ubiquitin-like_domsf"/>
</dbReference>
<dbReference type="InterPro" id="IPR045578">
    <property type="entry name" value="USP47_C"/>
</dbReference>
<dbReference type="InterPro" id="IPR018200">
    <property type="entry name" value="USP_CS"/>
</dbReference>
<dbReference type="InterPro" id="IPR028889">
    <property type="entry name" value="USP_dom"/>
</dbReference>
<dbReference type="PANTHER" id="PTHR24006">
    <property type="entry name" value="UBIQUITIN CARBOXYL-TERMINAL HYDROLASE"/>
    <property type="match status" value="1"/>
</dbReference>
<dbReference type="PANTHER" id="PTHR24006:SF702">
    <property type="entry name" value="UBIQUITIN CARBOXYL-TERMINAL HYDROLASE 47"/>
    <property type="match status" value="1"/>
</dbReference>
<dbReference type="Pfam" id="PF00443">
    <property type="entry name" value="UCH"/>
    <property type="match status" value="1"/>
</dbReference>
<dbReference type="Pfam" id="PF19718">
    <property type="entry name" value="USP47_C"/>
    <property type="match status" value="1"/>
</dbReference>
<dbReference type="SUPFAM" id="SSF54001">
    <property type="entry name" value="Cysteine proteinases"/>
    <property type="match status" value="1"/>
</dbReference>
<dbReference type="SUPFAM" id="SSF54236">
    <property type="entry name" value="Ubiquitin-like"/>
    <property type="match status" value="1"/>
</dbReference>
<dbReference type="PROSITE" id="PS00972">
    <property type="entry name" value="USP_1"/>
    <property type="match status" value="1"/>
</dbReference>
<dbReference type="PROSITE" id="PS00973">
    <property type="entry name" value="USP_2"/>
    <property type="match status" value="1"/>
</dbReference>
<dbReference type="PROSITE" id="PS50235">
    <property type="entry name" value="USP_3"/>
    <property type="match status" value="1"/>
</dbReference>
<evidence type="ECO:0000250" key="1"/>
<evidence type="ECO:0000250" key="2">
    <source>
        <dbReference type="UniProtKB" id="Q96K76"/>
    </source>
</evidence>
<evidence type="ECO:0000255" key="3">
    <source>
        <dbReference type="PROSITE-ProRule" id="PRU10092"/>
    </source>
</evidence>
<evidence type="ECO:0000255" key="4">
    <source>
        <dbReference type="PROSITE-ProRule" id="PRU10093"/>
    </source>
</evidence>
<evidence type="ECO:0000256" key="5">
    <source>
        <dbReference type="SAM" id="MobiDB-lite"/>
    </source>
</evidence>
<evidence type="ECO:0000269" key="6">
    <source>
    </source>
</evidence>
<evidence type="ECO:0000303" key="7">
    <source>
    </source>
</evidence>
<evidence type="ECO:0000305" key="8"/>
<evidence type="ECO:0007744" key="9">
    <source>
    </source>
</evidence>
<evidence type="ECO:0007744" key="10">
    <source>
    </source>
</evidence>
<evidence type="ECO:0007744" key="11">
    <source>
    </source>
</evidence>
<sequence length="1376" mass="157455">MVPGEENQLVPKEDVFWRCRQNIFDEMKKKFLQIENAAEEPRVLCIIQDTTNSKTVSERITLNLPASTPVRKLFEDVANKVGYINGTFDLTRENGVTTADMAPLDHTSDKSLLDANFEPGKKNFLHLTDKDGEPPQMLLEDSNNVDDSVHDRFIGPLPREGSVASTNDYVSQNYSYSSILNKSETGYVGLVNQAMTCYLNSLLQTLFMTPEFRNALYKWEFEDSEEDPVTSIPYQLQRLFVLLQTSKKRAIETTDVTRSFGWDSSEAWQQHDVQELCRVMFDALEQKWKQTEQADLINELYQGKLKDYVRCLECGYEGWRIDTYLDIPLVIRPYGSSQAFASVEEALHAFIQPEILDGPNQYFCERCKKKCDARKGLRFLHFPYLLTLQLKRFDFDYTTMHRIKLNDRMSFPEELDMSTFIDIEDEKSPQTESCTDSGAENEGSCHSDQMSNDFSTDDAVDEGICLESSSGSEKISKPGLEKNSLMYELFSVMVHSGSAAGGHYYACIKSFSDDQWYSFNDQHVSRITQEDIKKTHGGSSGSRGYYSSAFASSTNAYMLIYRLKDPTRNAKFLEVDEYPEHIKNLVQKERELEEQEKRQREIERNTCKIKLFCLHPVKQVMMENKLEVHKDKTLKEAVEMAYKMMDLEDVIPLDCCRLVKYDEFHDYLERSYEGEEDTPMGLLLGGVKSTYMFDLLLETRKPDQIFQSYKPGEVMVKVHVVDLKAETVAAPVTVRAYLNQTVTEFKQLISKATHLPADSMRIVLERCYNDLRLLSMPSKTLKAEGFFRSNKVFVESSETVDHQAAFTDSHLWKLLDRHANTIRLFVLLPEQSPGSYSKRTAYQKAGGDSGNVDDDCERVKGPAGNLKSVDAILEESTEKLKSLSLQQQQQDGDNGDSSKSTETSDFENIESPLNERGSSTSVDNRELEQHIQTSDPENFQSEERSDSDVNNDRSTSSVDSDILSSSHSSDTLCNADSAQIPLANGLDSHSITSSRRTKANEGKKETWDTAEEDSGTDSEYDESGKSRGDMQYMYFKADPYTADEGSGEGHKWLMVHVDKRITLAAFKQHLEPFVGVLSSHFKVFRVYTSNQEFETVRLNETLSSFSDDNKITIRLGRALKKGEYRVKVCQLLVNEQEPCKFLLDAVFAKGMTVRQSKEELIPQLREQCGLDLSIDRFRLRKKTWKNPGTVFLDYHIYEEDINISSNWEVFLEVLDGVEKMKSMSQLAILTRRWRPAEMKLDPFQELVLESNSVDELREKLSEISGIPLEDIEFAKGRGTFPCDISVLDIHQDLDWNPKVSTLNVWPLYICDDGAVIFYRDRTEEVMELTDEQRNELMKKESSRLQKTGHRVTYSPRKEKALKIYLDGAPNKDVAQD</sequence>
<feature type="chain" id="PRO_0000080677" description="Ubiquitin carboxyl-terminal hydrolase 47">
    <location>
        <begin position="1"/>
        <end position="1376"/>
    </location>
</feature>
<feature type="domain" description="USP">
    <location>
        <begin position="188"/>
        <end position="564"/>
    </location>
</feature>
<feature type="region of interest" description="Disordered" evidence="5">
    <location>
        <begin position="426"/>
        <end position="452"/>
    </location>
</feature>
<feature type="region of interest" description="Disordered" evidence="5">
    <location>
        <begin position="835"/>
        <end position="863"/>
    </location>
</feature>
<feature type="region of interest" description="Disordered" evidence="5">
    <location>
        <begin position="880"/>
        <end position="971"/>
    </location>
</feature>
<feature type="region of interest" description="Disordered" evidence="5">
    <location>
        <begin position="985"/>
        <end position="1025"/>
    </location>
</feature>
<feature type="compositionally biased region" description="Polar residues" evidence="5">
    <location>
        <begin position="430"/>
        <end position="452"/>
    </location>
</feature>
<feature type="compositionally biased region" description="Low complexity" evidence="5">
    <location>
        <begin position="882"/>
        <end position="900"/>
    </location>
</feature>
<feature type="compositionally biased region" description="Polar residues" evidence="5">
    <location>
        <begin position="930"/>
        <end position="939"/>
    </location>
</feature>
<feature type="compositionally biased region" description="Basic and acidic residues" evidence="5">
    <location>
        <begin position="941"/>
        <end position="951"/>
    </location>
</feature>
<feature type="compositionally biased region" description="Low complexity" evidence="5">
    <location>
        <begin position="954"/>
        <end position="970"/>
    </location>
</feature>
<feature type="compositionally biased region" description="Basic and acidic residues" evidence="5">
    <location>
        <begin position="998"/>
        <end position="1007"/>
    </location>
</feature>
<feature type="compositionally biased region" description="Acidic residues" evidence="5">
    <location>
        <begin position="1008"/>
        <end position="1021"/>
    </location>
</feature>
<feature type="active site" description="Nucleophile" evidence="3 4">
    <location>
        <position position="197"/>
    </location>
</feature>
<feature type="active site" description="Proton acceptor" evidence="3 4">
    <location>
        <position position="503"/>
    </location>
</feature>
<feature type="modified residue" description="N6-acetyllysine" evidence="2">
    <location>
        <position position="122"/>
    </location>
</feature>
<feature type="modified residue" description="Phosphoserine" evidence="2">
    <location>
        <position position="832"/>
    </location>
</feature>
<feature type="modified residue" description="Phosphoserine" evidence="9 11">
    <location>
        <position position="911"/>
    </location>
</feature>
<feature type="modified residue" description="Phosphoserine" evidence="11">
    <location>
        <position position="934"/>
    </location>
</feature>
<feature type="modified residue" description="Phosphoserine" evidence="11">
    <location>
        <position position="1014"/>
    </location>
</feature>
<feature type="modified residue" description="Phosphothreonine" evidence="10 11">
    <location>
        <position position="1016"/>
    </location>
</feature>
<feature type="modified residue" description="Phosphoserine" evidence="2">
    <location>
        <position position="1018"/>
    </location>
</feature>
<feature type="splice variant" id="VSP_014416" description="In isoform 2." evidence="7">
    <location>
        <begin position="14"/>
        <end position="33"/>
    </location>
</feature>
<feature type="sequence conflict" description="In Ref. 1; BAC38411." evidence="8" ref="1">
    <original>A</original>
    <variation>G</variation>
    <location>
        <position position="341"/>
    </location>
</feature>
<feature type="sequence conflict" description="In Ref. 1; BAC38411." evidence="8" ref="1">
    <original>GLRF</original>
    <variation>VRDL</variation>
    <location>
        <begin position="376"/>
        <end position="379"/>
    </location>
</feature>
<feature type="sequence conflict" description="In Ref. 3; AAI08426." evidence="8" ref="3">
    <original>R</original>
    <variation>G</variation>
    <location>
        <position position="562"/>
    </location>
</feature>
<feature type="sequence conflict" description="In Ref. 3; AAI08426." evidence="8" ref="3">
    <original>I</original>
    <variation>T</variation>
    <location>
        <position position="1174"/>
    </location>
</feature>
<feature type="sequence conflict" description="In Ref. 1; BAC27195." evidence="8" ref="1">
    <original>R</original>
    <variation>H</variation>
    <location>
        <position position="1178"/>
    </location>
</feature>
<feature type="sequence conflict" description="In Ref. 1; BAC40073." evidence="8" ref="1">
    <original>DINI</original>
    <variation>IYNF</variation>
    <location>
        <begin position="1200"/>
        <end position="1203"/>
    </location>
</feature>
<feature type="sequence conflict" description="In Ref. 1; BAC27195." evidence="8" ref="1">
    <original>R</original>
    <variation>Q</variation>
    <location>
        <position position="1257"/>
    </location>
</feature>
<feature type="sequence conflict" description="In Ref. 3; AAH12722." evidence="8" ref="3">
    <original>VST</original>
    <variation>TRP</variation>
    <location>
        <begin position="1299"/>
        <end position="1301"/>
    </location>
</feature>